<evidence type="ECO:0000250" key="1"/>
<evidence type="ECO:0000256" key="2">
    <source>
        <dbReference type="SAM" id="MobiDB-lite"/>
    </source>
</evidence>
<evidence type="ECO:0000305" key="3"/>
<feature type="chain" id="PRO_0000409421" description="Tethering factor for nuclear proteasome STS1">
    <location>
        <begin position="1"/>
        <end position="311"/>
    </location>
</feature>
<feature type="region of interest" description="Disordered" evidence="2">
    <location>
        <begin position="1"/>
        <end position="84"/>
    </location>
</feature>
<feature type="region of interest" description="Disordered" evidence="2">
    <location>
        <begin position="277"/>
        <end position="311"/>
    </location>
</feature>
<feature type="compositionally biased region" description="Low complexity" evidence="2">
    <location>
        <begin position="21"/>
        <end position="32"/>
    </location>
</feature>
<feature type="compositionally biased region" description="Basic and acidic residues" evidence="2">
    <location>
        <begin position="38"/>
        <end position="50"/>
    </location>
</feature>
<feature type="compositionally biased region" description="Low complexity" evidence="2">
    <location>
        <begin position="52"/>
        <end position="70"/>
    </location>
</feature>
<feature type="compositionally biased region" description="Polar residues" evidence="2">
    <location>
        <begin position="278"/>
        <end position="287"/>
    </location>
</feature>
<feature type="compositionally biased region" description="Polar residues" evidence="2">
    <location>
        <begin position="296"/>
        <end position="311"/>
    </location>
</feature>
<sequence length="311" mass="34092">MNSLLATPPVPPHFYEHVRLSPSRSMSSANSSGNRKRKAEDDNPSDHDTRMSASPSNSPALAPRPLPTARQIKRPRPNISGRPLPLSRLLETLDTDALRSVLRSMCNRHPELETEVVHTAPRPSVSSALQVLSNYESTLQSSFPLGGNSSSDYAYNRVRQHITNLLDALNDFTPHFLPPNESQVSTALSYLDGATEILHRLPRWDTPQHNLEKDVAYEEIAKAWIVVIREAGKRGGGIQLQYGGWDLKLSKHNQTAGGKLQDAINVLSSSLGWMGGHQDSSASQGGDPSSIRHQLLSGTYGSSSPLKVSKW</sequence>
<reference key="1">
    <citation type="journal article" date="2011" name="PLoS Genet.">
        <title>Comparative genomic analysis of human fungal pathogens causing paracoccidioidomycosis.</title>
        <authorList>
            <person name="Desjardins C.A."/>
            <person name="Champion M.D."/>
            <person name="Holder J.W."/>
            <person name="Muszewska A."/>
            <person name="Goldberg J."/>
            <person name="Bailao A.M."/>
            <person name="Brigido M.M."/>
            <person name="Ferreira M.E."/>
            <person name="Garcia A.M."/>
            <person name="Grynberg M."/>
            <person name="Gujja S."/>
            <person name="Heiman D.I."/>
            <person name="Henn M.R."/>
            <person name="Kodira C.D."/>
            <person name="Leon-Narvaez H."/>
            <person name="Longo L.V.G."/>
            <person name="Ma L.-J."/>
            <person name="Malavazi I."/>
            <person name="Matsuo A.L."/>
            <person name="Morais F.V."/>
            <person name="Pereira M."/>
            <person name="Rodriguez-Brito S."/>
            <person name="Sakthikumar S."/>
            <person name="Salem-Izacc S.M."/>
            <person name="Sykes S.M."/>
            <person name="Teixeira M.M."/>
            <person name="Vallejo M.C."/>
            <person name="Walter M.E."/>
            <person name="Yandava C."/>
            <person name="Young S."/>
            <person name="Zeng Q."/>
            <person name="Zucker J."/>
            <person name="Felipe M.S."/>
            <person name="Goldman G.H."/>
            <person name="Haas B.J."/>
            <person name="McEwen J.G."/>
            <person name="Nino-Vega G."/>
            <person name="Puccia R."/>
            <person name="San-Blas G."/>
            <person name="Soares C.M."/>
            <person name="Birren B.W."/>
            <person name="Cuomo C.A."/>
        </authorList>
    </citation>
    <scope>NUCLEOTIDE SEQUENCE [LARGE SCALE GENOMIC DNA]</scope>
    <source>
        <strain>Pb18</strain>
    </source>
</reference>
<proteinExistence type="inferred from homology"/>
<dbReference type="EMBL" id="KN275971">
    <property type="protein sequence ID" value="EEH43369.1"/>
    <property type="molecule type" value="Genomic_DNA"/>
</dbReference>
<dbReference type="RefSeq" id="XP_010763557.1">
    <property type="nucleotide sequence ID" value="XM_010765255.1"/>
</dbReference>
<dbReference type="SMR" id="C1GLQ3"/>
<dbReference type="FunCoup" id="C1GLQ3">
    <property type="interactions" value="11"/>
</dbReference>
<dbReference type="STRING" id="502780.C1GLQ3"/>
<dbReference type="GeneID" id="22586616"/>
<dbReference type="KEGG" id="pbn:PADG_08294"/>
<dbReference type="VEuPathDB" id="FungiDB:PADG_08294"/>
<dbReference type="eggNOG" id="ENOG502RNK4">
    <property type="taxonomic scope" value="Eukaryota"/>
</dbReference>
<dbReference type="HOGENOM" id="CLU_033658_0_0_1"/>
<dbReference type="InParanoid" id="C1GLQ3"/>
<dbReference type="OMA" id="DYTPHFL"/>
<dbReference type="OrthoDB" id="12886at33183"/>
<dbReference type="Proteomes" id="UP000001628">
    <property type="component" value="Unassembled WGS sequence"/>
</dbReference>
<dbReference type="GO" id="GO:0005737">
    <property type="term" value="C:cytoplasm"/>
    <property type="evidence" value="ECO:0007669"/>
    <property type="project" value="UniProtKB-SubCell"/>
</dbReference>
<dbReference type="GO" id="GO:0031965">
    <property type="term" value="C:nuclear membrane"/>
    <property type="evidence" value="ECO:0007669"/>
    <property type="project" value="TreeGrafter"/>
</dbReference>
<dbReference type="GO" id="GO:0070628">
    <property type="term" value="F:proteasome binding"/>
    <property type="evidence" value="ECO:0007669"/>
    <property type="project" value="TreeGrafter"/>
</dbReference>
<dbReference type="GO" id="GO:0071630">
    <property type="term" value="P:nuclear protein quality control by the ubiquitin-proteasome system"/>
    <property type="evidence" value="ECO:0007669"/>
    <property type="project" value="InterPro"/>
</dbReference>
<dbReference type="GO" id="GO:0031144">
    <property type="term" value="P:proteasome localization"/>
    <property type="evidence" value="ECO:0007669"/>
    <property type="project" value="InterPro"/>
</dbReference>
<dbReference type="GO" id="GO:0015031">
    <property type="term" value="P:protein transport"/>
    <property type="evidence" value="ECO:0007669"/>
    <property type="project" value="UniProtKB-KW"/>
</dbReference>
<dbReference type="FunFam" id="1.20.58.1590:FF:000001">
    <property type="entry name" value="Tethering factor for nuclear proteasome STS1"/>
    <property type="match status" value="1"/>
</dbReference>
<dbReference type="Gene3D" id="1.20.58.1590">
    <property type="entry name" value="Tethering factor for nuclear proteasome Cut8/Sts1"/>
    <property type="match status" value="1"/>
</dbReference>
<dbReference type="InterPro" id="IPR013868">
    <property type="entry name" value="Cut8/Sts1_fam"/>
</dbReference>
<dbReference type="InterPro" id="IPR038422">
    <property type="entry name" value="Cut8/Sts1_sf"/>
</dbReference>
<dbReference type="PANTHER" id="PTHR28032">
    <property type="entry name" value="FI02826P"/>
    <property type="match status" value="1"/>
</dbReference>
<dbReference type="PANTHER" id="PTHR28032:SF1">
    <property type="entry name" value="FI02826P"/>
    <property type="match status" value="1"/>
</dbReference>
<dbReference type="Pfam" id="PF08559">
    <property type="entry name" value="Cut8"/>
    <property type="match status" value="1"/>
</dbReference>
<gene>
    <name type="primary">STS1</name>
    <name type="ORF">PADG_08294</name>
</gene>
<keyword id="KW-0963">Cytoplasm</keyword>
<keyword id="KW-0539">Nucleus</keyword>
<keyword id="KW-0653">Protein transport</keyword>
<keyword id="KW-1185">Reference proteome</keyword>
<keyword id="KW-0813">Transport</keyword>
<name>STS1_PARBD</name>
<organism>
    <name type="scientific">Paracoccidioides brasiliensis (strain Pb18)</name>
    <dbReference type="NCBI Taxonomy" id="502780"/>
    <lineage>
        <taxon>Eukaryota</taxon>
        <taxon>Fungi</taxon>
        <taxon>Dikarya</taxon>
        <taxon>Ascomycota</taxon>
        <taxon>Pezizomycotina</taxon>
        <taxon>Eurotiomycetes</taxon>
        <taxon>Eurotiomycetidae</taxon>
        <taxon>Onygenales</taxon>
        <taxon>Ajellomycetaceae</taxon>
        <taxon>Paracoccidioides</taxon>
    </lineage>
</organism>
<comment type="function">
    <text evidence="1">Involved in ubiquitin-mediated protein degradation. Regulatory factor in the ubiquitin/proteasome pathway that controls the turnover of proteasome substrates. Targets proteasomes to the nucleus and facilitates the degradation of nuclear proteins (By similarity).</text>
</comment>
<comment type="subunit">
    <text evidence="1">Binds the proteasome.</text>
</comment>
<comment type="subcellular location">
    <subcellularLocation>
        <location evidence="1">Cytoplasm</location>
    </subcellularLocation>
    <subcellularLocation>
        <location evidence="1">Nucleus</location>
    </subcellularLocation>
</comment>
<comment type="similarity">
    <text evidence="3">Belongs to the cut8/STS1 family.</text>
</comment>
<accession>C1GLQ3</accession>
<protein>
    <recommendedName>
        <fullName>Tethering factor for nuclear proteasome STS1</fullName>
    </recommendedName>
</protein>